<dbReference type="EMBL" id="BX571865">
    <property type="protein sequence ID" value="CAE14320.1"/>
    <property type="molecule type" value="Genomic_DNA"/>
</dbReference>
<dbReference type="RefSeq" id="WP_011146283.1">
    <property type="nucleotide sequence ID" value="NC_005126.1"/>
</dbReference>
<dbReference type="SMR" id="Q7N5C7"/>
<dbReference type="STRING" id="243265.plu2027"/>
<dbReference type="GeneID" id="48848302"/>
<dbReference type="KEGG" id="plu:plu2027"/>
<dbReference type="eggNOG" id="COG0322">
    <property type="taxonomic scope" value="Bacteria"/>
</dbReference>
<dbReference type="HOGENOM" id="CLU_014841_3_2_6"/>
<dbReference type="OrthoDB" id="9804933at2"/>
<dbReference type="Proteomes" id="UP000002514">
    <property type="component" value="Chromosome"/>
</dbReference>
<dbReference type="GO" id="GO:0005737">
    <property type="term" value="C:cytoplasm"/>
    <property type="evidence" value="ECO:0007669"/>
    <property type="project" value="UniProtKB-SubCell"/>
</dbReference>
<dbReference type="GO" id="GO:0009380">
    <property type="term" value="C:excinuclease repair complex"/>
    <property type="evidence" value="ECO:0007669"/>
    <property type="project" value="InterPro"/>
</dbReference>
<dbReference type="GO" id="GO:0003677">
    <property type="term" value="F:DNA binding"/>
    <property type="evidence" value="ECO:0007669"/>
    <property type="project" value="UniProtKB-UniRule"/>
</dbReference>
<dbReference type="GO" id="GO:0009381">
    <property type="term" value="F:excinuclease ABC activity"/>
    <property type="evidence" value="ECO:0007669"/>
    <property type="project" value="UniProtKB-UniRule"/>
</dbReference>
<dbReference type="GO" id="GO:0006289">
    <property type="term" value="P:nucleotide-excision repair"/>
    <property type="evidence" value="ECO:0007669"/>
    <property type="project" value="UniProtKB-UniRule"/>
</dbReference>
<dbReference type="GO" id="GO:0009432">
    <property type="term" value="P:SOS response"/>
    <property type="evidence" value="ECO:0007669"/>
    <property type="project" value="UniProtKB-UniRule"/>
</dbReference>
<dbReference type="CDD" id="cd10434">
    <property type="entry name" value="GIY-YIG_UvrC_Cho"/>
    <property type="match status" value="1"/>
</dbReference>
<dbReference type="FunFam" id="1.10.150.20:FF:000005">
    <property type="entry name" value="UvrABC system protein C"/>
    <property type="match status" value="1"/>
</dbReference>
<dbReference type="FunFam" id="3.30.420.340:FF:000001">
    <property type="entry name" value="UvrABC system protein C"/>
    <property type="match status" value="1"/>
</dbReference>
<dbReference type="FunFam" id="3.40.1440.10:FF:000001">
    <property type="entry name" value="UvrABC system protein C"/>
    <property type="match status" value="1"/>
</dbReference>
<dbReference type="FunFam" id="4.10.860.10:FF:000002">
    <property type="entry name" value="UvrABC system protein C"/>
    <property type="match status" value="1"/>
</dbReference>
<dbReference type="Gene3D" id="1.10.150.20">
    <property type="entry name" value="5' to 3' exonuclease, C-terminal subdomain"/>
    <property type="match status" value="1"/>
</dbReference>
<dbReference type="Gene3D" id="3.40.1440.10">
    <property type="entry name" value="GIY-YIG endonuclease"/>
    <property type="match status" value="1"/>
</dbReference>
<dbReference type="Gene3D" id="4.10.860.10">
    <property type="entry name" value="UVR domain"/>
    <property type="match status" value="1"/>
</dbReference>
<dbReference type="Gene3D" id="3.30.420.340">
    <property type="entry name" value="UvrC, RNAse H endonuclease domain"/>
    <property type="match status" value="1"/>
</dbReference>
<dbReference type="HAMAP" id="MF_00203">
    <property type="entry name" value="UvrC"/>
    <property type="match status" value="1"/>
</dbReference>
<dbReference type="InterPro" id="IPR000305">
    <property type="entry name" value="GIY-YIG_endonuc"/>
</dbReference>
<dbReference type="InterPro" id="IPR035901">
    <property type="entry name" value="GIY-YIG_endonuc_sf"/>
</dbReference>
<dbReference type="InterPro" id="IPR047296">
    <property type="entry name" value="GIY-YIG_UvrC_Cho"/>
</dbReference>
<dbReference type="InterPro" id="IPR003583">
    <property type="entry name" value="Hlx-hairpin-Hlx_DNA-bd_motif"/>
</dbReference>
<dbReference type="InterPro" id="IPR010994">
    <property type="entry name" value="RuvA_2-like"/>
</dbReference>
<dbReference type="InterPro" id="IPR001943">
    <property type="entry name" value="UVR_dom"/>
</dbReference>
<dbReference type="InterPro" id="IPR036876">
    <property type="entry name" value="UVR_dom_sf"/>
</dbReference>
<dbReference type="InterPro" id="IPR050066">
    <property type="entry name" value="UvrABC_protein_C"/>
</dbReference>
<dbReference type="InterPro" id="IPR004791">
    <property type="entry name" value="UvrC"/>
</dbReference>
<dbReference type="InterPro" id="IPR001162">
    <property type="entry name" value="UvrC_RNase_H_dom"/>
</dbReference>
<dbReference type="InterPro" id="IPR038476">
    <property type="entry name" value="UvrC_RNase_H_dom_sf"/>
</dbReference>
<dbReference type="NCBIfam" id="NF001824">
    <property type="entry name" value="PRK00558.1-5"/>
    <property type="match status" value="1"/>
</dbReference>
<dbReference type="NCBIfam" id="TIGR00194">
    <property type="entry name" value="uvrC"/>
    <property type="match status" value="1"/>
</dbReference>
<dbReference type="PANTHER" id="PTHR30562:SF1">
    <property type="entry name" value="UVRABC SYSTEM PROTEIN C"/>
    <property type="match status" value="1"/>
</dbReference>
<dbReference type="PANTHER" id="PTHR30562">
    <property type="entry name" value="UVRC/OXIDOREDUCTASE"/>
    <property type="match status" value="1"/>
</dbReference>
<dbReference type="Pfam" id="PF01541">
    <property type="entry name" value="GIY-YIG"/>
    <property type="match status" value="1"/>
</dbReference>
<dbReference type="Pfam" id="PF14520">
    <property type="entry name" value="HHH_5"/>
    <property type="match status" value="1"/>
</dbReference>
<dbReference type="Pfam" id="PF02151">
    <property type="entry name" value="UVR"/>
    <property type="match status" value="1"/>
</dbReference>
<dbReference type="Pfam" id="PF22920">
    <property type="entry name" value="UvrC_RNaseH"/>
    <property type="match status" value="1"/>
</dbReference>
<dbReference type="Pfam" id="PF08459">
    <property type="entry name" value="UvrC_RNaseH_dom"/>
    <property type="match status" value="1"/>
</dbReference>
<dbReference type="SMART" id="SM00465">
    <property type="entry name" value="GIYc"/>
    <property type="match status" value="1"/>
</dbReference>
<dbReference type="SMART" id="SM00278">
    <property type="entry name" value="HhH1"/>
    <property type="match status" value="2"/>
</dbReference>
<dbReference type="SUPFAM" id="SSF46600">
    <property type="entry name" value="C-terminal UvrC-binding domain of UvrB"/>
    <property type="match status" value="1"/>
</dbReference>
<dbReference type="SUPFAM" id="SSF82771">
    <property type="entry name" value="GIY-YIG endonuclease"/>
    <property type="match status" value="1"/>
</dbReference>
<dbReference type="SUPFAM" id="SSF47781">
    <property type="entry name" value="RuvA domain 2-like"/>
    <property type="match status" value="1"/>
</dbReference>
<dbReference type="PROSITE" id="PS50164">
    <property type="entry name" value="GIY_YIG"/>
    <property type="match status" value="1"/>
</dbReference>
<dbReference type="PROSITE" id="PS50151">
    <property type="entry name" value="UVR"/>
    <property type="match status" value="1"/>
</dbReference>
<dbReference type="PROSITE" id="PS50165">
    <property type="entry name" value="UVRC"/>
    <property type="match status" value="1"/>
</dbReference>
<name>UVRC_PHOLL</name>
<accession>Q7N5C7</accession>
<protein>
    <recommendedName>
        <fullName evidence="1">UvrABC system protein C</fullName>
        <shortName evidence="1">Protein UvrC</shortName>
    </recommendedName>
    <alternativeName>
        <fullName evidence="1">Excinuclease ABC subunit C</fullName>
    </alternativeName>
</protein>
<keyword id="KW-0963">Cytoplasm</keyword>
<keyword id="KW-0227">DNA damage</keyword>
<keyword id="KW-0228">DNA excision</keyword>
<keyword id="KW-0234">DNA repair</keyword>
<keyword id="KW-0267">Excision nuclease</keyword>
<keyword id="KW-1185">Reference proteome</keyword>
<keyword id="KW-0742">SOS response</keyword>
<evidence type="ECO:0000255" key="1">
    <source>
        <dbReference type="HAMAP-Rule" id="MF_00203"/>
    </source>
</evidence>
<feature type="chain" id="PRO_0000227457" description="UvrABC system protein C">
    <location>
        <begin position="1"/>
        <end position="610"/>
    </location>
</feature>
<feature type="domain" description="GIY-YIG" evidence="1">
    <location>
        <begin position="16"/>
        <end position="94"/>
    </location>
</feature>
<feature type="domain" description="UVR" evidence="1">
    <location>
        <begin position="204"/>
        <end position="239"/>
    </location>
</feature>
<gene>
    <name evidence="1" type="primary">uvrC</name>
    <name type="ordered locus">plu2027</name>
</gene>
<reference key="1">
    <citation type="journal article" date="2003" name="Nat. Biotechnol.">
        <title>The genome sequence of the entomopathogenic bacterium Photorhabdus luminescens.</title>
        <authorList>
            <person name="Duchaud E."/>
            <person name="Rusniok C."/>
            <person name="Frangeul L."/>
            <person name="Buchrieser C."/>
            <person name="Givaudan A."/>
            <person name="Taourit S."/>
            <person name="Bocs S."/>
            <person name="Boursaux-Eude C."/>
            <person name="Chandler M."/>
            <person name="Charles J.-F."/>
            <person name="Dassa E."/>
            <person name="Derose R."/>
            <person name="Derzelle S."/>
            <person name="Freyssinet G."/>
            <person name="Gaudriault S."/>
            <person name="Medigue C."/>
            <person name="Lanois A."/>
            <person name="Powell K."/>
            <person name="Siguier P."/>
            <person name="Vincent R."/>
            <person name="Wingate V."/>
            <person name="Zouine M."/>
            <person name="Glaser P."/>
            <person name="Boemare N."/>
            <person name="Danchin A."/>
            <person name="Kunst F."/>
        </authorList>
    </citation>
    <scope>NUCLEOTIDE SEQUENCE [LARGE SCALE GENOMIC DNA]</scope>
    <source>
        <strain>DSM 15139 / CIP 105565 / TT01</strain>
    </source>
</reference>
<proteinExistence type="inferred from homology"/>
<organism>
    <name type="scientific">Photorhabdus laumondii subsp. laumondii (strain DSM 15139 / CIP 105565 / TT01)</name>
    <name type="common">Photorhabdus luminescens subsp. laumondii</name>
    <dbReference type="NCBI Taxonomy" id="243265"/>
    <lineage>
        <taxon>Bacteria</taxon>
        <taxon>Pseudomonadati</taxon>
        <taxon>Pseudomonadota</taxon>
        <taxon>Gammaproteobacteria</taxon>
        <taxon>Enterobacterales</taxon>
        <taxon>Morganellaceae</taxon>
        <taxon>Photorhabdus</taxon>
    </lineage>
</organism>
<sequence length="610" mass="69503">MTEQFDSKTFLKTVTSQPGVYRMYDTSGTVIYVGKAKDLKKRLASYFRAQVTSRKTESLVKNIVQIDVTVTHTETEALLLEHNYIKLYQPRYNVLLRDDKSYPYIFLSADKHPRLAMYRGAKHFKGEYFGPFPNTHAVRESLILLQKLFPIRQCEDSVYRNRSRPCLQYQIGRCLGPCVKGLVSEDEYQQQVDYIRLFLSGKDQQVLTRLIERMEQASQQLKFEDAARYRDQIQAVRQVTERQFVSGTDDDLDVISVAFDAGMACLHVLFIRQGKVLGSRSYYPKIPTGTTLDEIVQTFLGQFYLQGSQNRTLPSEILLDFTLPEKDILSDSLSEISGRKIHIQTRPRGDKARYLKLARTNATIALSTRLSQQSTIHQRLDSLTKLVKLAKIQRMECFDISHTMGEQTVASCVVFDSNGPLRSEYRRYNISGITPGDDYAAMNQVLRRRYGKALDESKIPDIIFIDGGKGQLAQAIDVFQSLDVEWDKTRPQLIGVAKGSDRKAGLETLFFATEDKSIALPPDSPALHVIQHIRDESHNHAITGHRQRRSKVRNTSTLESIEGVGPKRRQMLLKYMGGLQPLRNASVEEIAKVPTISYALAEKIYNALKH</sequence>
<comment type="function">
    <text evidence="1">The UvrABC repair system catalyzes the recognition and processing of DNA lesions. UvrC both incises the 5' and 3' sides of the lesion. The N-terminal half is responsible for the 3' incision and the C-terminal half is responsible for the 5' incision.</text>
</comment>
<comment type="subunit">
    <text evidence="1">Interacts with UvrB in an incision complex.</text>
</comment>
<comment type="subcellular location">
    <subcellularLocation>
        <location evidence="1">Cytoplasm</location>
    </subcellularLocation>
</comment>
<comment type="similarity">
    <text evidence="1">Belongs to the UvrC family.</text>
</comment>